<feature type="chain" id="PRO_0000165329" description="Uncharacterized 18.2 kDa protein in rep-hol intergenic region">
    <location>
        <begin position="1"/>
        <end position="163"/>
    </location>
</feature>
<reference key="1">
    <citation type="journal article" date="1996" name="Nucleic Acids Res.">
        <title>The complete nucleotide sequence of bacteriophage HP1 DNA.</title>
        <authorList>
            <person name="Esposito D."/>
            <person name="Fitzmaurice W.P."/>
            <person name="Benjamin R.C."/>
            <person name="Goodman S.D."/>
            <person name="Waldman A.S."/>
            <person name="Scocca J.J."/>
        </authorList>
    </citation>
    <scope>NUCLEOTIDE SEQUENCE [LARGE SCALE GENOMIC DNA]</scope>
</reference>
<organism>
    <name type="scientific">Haemophilus phage HP1 (strain HP1c1)</name>
    <name type="common">Bacteriophage HP1</name>
    <dbReference type="NCBI Taxonomy" id="1289570"/>
    <lineage>
        <taxon>Viruses</taxon>
        <taxon>Duplodnaviria</taxon>
        <taxon>Heunggongvirae</taxon>
        <taxon>Uroviricota</taxon>
        <taxon>Caudoviricetes</taxon>
        <taxon>Peduoviridae</taxon>
        <taxon>Hpunavirus</taxon>
        <taxon>Haemophilus phage HP1</taxon>
    </lineage>
</organism>
<accession>P51714</accession>
<protein>
    <recommendedName>
        <fullName>Uncharacterized 18.2 kDa protein in rep-hol intergenic region</fullName>
    </recommendedName>
    <alternativeName>
        <fullName>ORF12</fullName>
    </alternativeName>
</protein>
<name>YO12_BPHC1</name>
<sequence length="163" mass="18217">MADLQQLIKNIEQWAEDRNLVEDSTPQKQFIKLMEEFGELCSGVAKNKPDVIKDSIGDCFVVMVILAKQNHIDSVLEKISDLDSSFEKISDLNSFQHVFELGVEEIIVETVVSLGMLASELMGPNLEMPPQVDAIFGWPCLSLKLISRKYNLMLTDCVQAALG</sequence>
<dbReference type="EMBL" id="U24159">
    <property type="protein sequence ID" value="AAB09197.1"/>
    <property type="molecule type" value="Genomic_DNA"/>
</dbReference>
<dbReference type="PIR" id="S69518">
    <property type="entry name" value="S69518"/>
</dbReference>
<dbReference type="RefSeq" id="NP_043481.1">
    <property type="nucleotide sequence ID" value="NC_001697.1"/>
</dbReference>
<dbReference type="SMR" id="P51714"/>
<dbReference type="GeneID" id="1261144"/>
<dbReference type="KEGG" id="vg:1261144"/>
<dbReference type="Proteomes" id="UP000001713">
    <property type="component" value="Segment"/>
</dbReference>
<dbReference type="CDD" id="cd11540">
    <property type="entry name" value="NTP-PPase_u3"/>
    <property type="match status" value="1"/>
</dbReference>
<dbReference type="Gene3D" id="1.10.287.1080">
    <property type="entry name" value="MazG-like"/>
    <property type="match status" value="1"/>
</dbReference>
<dbReference type="InterPro" id="IPR004518">
    <property type="entry name" value="MazG-like_dom"/>
</dbReference>
<dbReference type="Pfam" id="PF03819">
    <property type="entry name" value="MazG"/>
    <property type="match status" value="1"/>
</dbReference>
<dbReference type="SUPFAM" id="SSF101386">
    <property type="entry name" value="all-alpha NTP pyrophosphatases"/>
    <property type="match status" value="1"/>
</dbReference>
<keyword id="KW-1185">Reference proteome</keyword>
<organismHost>
    <name type="scientific">Haemophilus influenzae</name>
    <dbReference type="NCBI Taxonomy" id="727"/>
</organismHost>
<proteinExistence type="predicted"/>